<gene>
    <name evidence="1" type="primary">rplX</name>
    <name type="ordered locus">HRM2_36150</name>
</gene>
<keyword id="KW-1185">Reference proteome</keyword>
<keyword id="KW-0687">Ribonucleoprotein</keyword>
<keyword id="KW-0689">Ribosomal protein</keyword>
<keyword id="KW-0694">RNA-binding</keyword>
<keyword id="KW-0699">rRNA-binding</keyword>
<evidence type="ECO:0000255" key="1">
    <source>
        <dbReference type="HAMAP-Rule" id="MF_01326"/>
    </source>
</evidence>
<evidence type="ECO:0000305" key="2"/>
<reference key="1">
    <citation type="journal article" date="2009" name="Environ. Microbiol.">
        <title>Genome sequence of Desulfobacterium autotrophicum HRM2, a marine sulfate reducer oxidizing organic carbon completely to carbon dioxide.</title>
        <authorList>
            <person name="Strittmatter A.W."/>
            <person name="Liesegang H."/>
            <person name="Rabus R."/>
            <person name="Decker I."/>
            <person name="Amann J."/>
            <person name="Andres S."/>
            <person name="Henne A."/>
            <person name="Fricke W.F."/>
            <person name="Martinez-Arias R."/>
            <person name="Bartels D."/>
            <person name="Goesmann A."/>
            <person name="Krause L."/>
            <person name="Puehler A."/>
            <person name="Klenk H.P."/>
            <person name="Richter M."/>
            <person name="Schuler M."/>
            <person name="Gloeckner F.O."/>
            <person name="Meyerdierks A."/>
            <person name="Gottschalk G."/>
            <person name="Amann R."/>
        </authorList>
    </citation>
    <scope>NUCLEOTIDE SEQUENCE [LARGE SCALE GENOMIC DNA]</scope>
    <source>
        <strain>ATCC 43914 / DSM 3382 / VKM B-1955 / HRM2</strain>
    </source>
</reference>
<name>RL24_DESAH</name>
<dbReference type="EMBL" id="CP001087">
    <property type="protein sequence ID" value="ACN16680.1"/>
    <property type="molecule type" value="Genomic_DNA"/>
</dbReference>
<dbReference type="RefSeq" id="WP_015905430.1">
    <property type="nucleotide sequence ID" value="NC_012108.1"/>
</dbReference>
<dbReference type="SMR" id="C0Q9W2"/>
<dbReference type="STRING" id="177437.HRM2_36150"/>
<dbReference type="KEGG" id="dat:HRM2_36150"/>
<dbReference type="eggNOG" id="COG0198">
    <property type="taxonomic scope" value="Bacteria"/>
</dbReference>
<dbReference type="HOGENOM" id="CLU_093315_2_3_7"/>
<dbReference type="OrthoDB" id="9807419at2"/>
<dbReference type="Proteomes" id="UP000000442">
    <property type="component" value="Chromosome"/>
</dbReference>
<dbReference type="GO" id="GO:1990904">
    <property type="term" value="C:ribonucleoprotein complex"/>
    <property type="evidence" value="ECO:0007669"/>
    <property type="project" value="UniProtKB-KW"/>
</dbReference>
<dbReference type="GO" id="GO:0005840">
    <property type="term" value="C:ribosome"/>
    <property type="evidence" value="ECO:0007669"/>
    <property type="project" value="UniProtKB-KW"/>
</dbReference>
<dbReference type="GO" id="GO:0019843">
    <property type="term" value="F:rRNA binding"/>
    <property type="evidence" value="ECO:0007669"/>
    <property type="project" value="UniProtKB-UniRule"/>
</dbReference>
<dbReference type="GO" id="GO:0003735">
    <property type="term" value="F:structural constituent of ribosome"/>
    <property type="evidence" value="ECO:0007669"/>
    <property type="project" value="InterPro"/>
</dbReference>
<dbReference type="GO" id="GO:0006412">
    <property type="term" value="P:translation"/>
    <property type="evidence" value="ECO:0007669"/>
    <property type="project" value="UniProtKB-UniRule"/>
</dbReference>
<dbReference type="CDD" id="cd06089">
    <property type="entry name" value="KOW_RPL26"/>
    <property type="match status" value="1"/>
</dbReference>
<dbReference type="FunFam" id="2.30.30.30:FF:000004">
    <property type="entry name" value="50S ribosomal protein L24"/>
    <property type="match status" value="1"/>
</dbReference>
<dbReference type="Gene3D" id="2.30.30.30">
    <property type="match status" value="1"/>
</dbReference>
<dbReference type="HAMAP" id="MF_01326_B">
    <property type="entry name" value="Ribosomal_uL24_B"/>
    <property type="match status" value="1"/>
</dbReference>
<dbReference type="InterPro" id="IPR005824">
    <property type="entry name" value="KOW"/>
</dbReference>
<dbReference type="InterPro" id="IPR014722">
    <property type="entry name" value="Rib_uL2_dom2"/>
</dbReference>
<dbReference type="InterPro" id="IPR003256">
    <property type="entry name" value="Ribosomal_uL24"/>
</dbReference>
<dbReference type="InterPro" id="IPR005825">
    <property type="entry name" value="Ribosomal_uL24_CS"/>
</dbReference>
<dbReference type="InterPro" id="IPR041988">
    <property type="entry name" value="Ribosomal_uL24_KOW"/>
</dbReference>
<dbReference type="InterPro" id="IPR008991">
    <property type="entry name" value="Translation_prot_SH3-like_sf"/>
</dbReference>
<dbReference type="NCBIfam" id="TIGR01079">
    <property type="entry name" value="rplX_bact"/>
    <property type="match status" value="1"/>
</dbReference>
<dbReference type="PANTHER" id="PTHR12903">
    <property type="entry name" value="MITOCHONDRIAL RIBOSOMAL PROTEIN L24"/>
    <property type="match status" value="1"/>
</dbReference>
<dbReference type="Pfam" id="PF00467">
    <property type="entry name" value="KOW"/>
    <property type="match status" value="1"/>
</dbReference>
<dbReference type="Pfam" id="PF17136">
    <property type="entry name" value="ribosomal_L24"/>
    <property type="match status" value="1"/>
</dbReference>
<dbReference type="SMART" id="SM00739">
    <property type="entry name" value="KOW"/>
    <property type="match status" value="1"/>
</dbReference>
<dbReference type="SUPFAM" id="SSF50104">
    <property type="entry name" value="Translation proteins SH3-like domain"/>
    <property type="match status" value="1"/>
</dbReference>
<dbReference type="PROSITE" id="PS01108">
    <property type="entry name" value="RIBOSOMAL_L24"/>
    <property type="match status" value="1"/>
</dbReference>
<organism>
    <name type="scientific">Desulforapulum autotrophicum (strain ATCC 43914 / DSM 3382 / VKM B-1955 / HRM2)</name>
    <name type="common">Desulfobacterium autotrophicum</name>
    <dbReference type="NCBI Taxonomy" id="177437"/>
    <lineage>
        <taxon>Bacteria</taxon>
        <taxon>Pseudomonadati</taxon>
        <taxon>Thermodesulfobacteriota</taxon>
        <taxon>Desulfobacteria</taxon>
        <taxon>Desulfobacterales</taxon>
        <taxon>Desulfobacteraceae</taxon>
        <taxon>Desulforapulum</taxon>
    </lineage>
</organism>
<proteinExistence type="inferred from homology"/>
<protein>
    <recommendedName>
        <fullName evidence="1">Large ribosomal subunit protein uL24</fullName>
    </recommendedName>
    <alternativeName>
        <fullName evidence="2">50S ribosomal protein L24</fullName>
    </alternativeName>
</protein>
<sequence>MENFKLKIKKEDKVKVLTGKDKGKIGKVLKVLRKKNRAVVENINVAKIHQRPTQANPQGGIVDKPMPVDCSNLMIMCNSCIKPVRVGIKQLEDGKKVRICKSCNEQIDA</sequence>
<feature type="chain" id="PRO_1000214538" description="Large ribosomal subunit protein uL24">
    <location>
        <begin position="1"/>
        <end position="109"/>
    </location>
</feature>
<accession>C0Q9W2</accession>
<comment type="function">
    <text evidence="1">One of two assembly initiator proteins, it binds directly to the 5'-end of the 23S rRNA, where it nucleates assembly of the 50S subunit.</text>
</comment>
<comment type="function">
    <text evidence="1">One of the proteins that surrounds the polypeptide exit tunnel on the outside of the subunit.</text>
</comment>
<comment type="subunit">
    <text evidence="1">Part of the 50S ribosomal subunit.</text>
</comment>
<comment type="similarity">
    <text evidence="1">Belongs to the universal ribosomal protein uL24 family.</text>
</comment>